<feature type="chain" id="PRO_1000139756" description="Glucosamine-6-phosphate deaminase">
    <location>
        <begin position="1"/>
        <end position="262"/>
    </location>
</feature>
<feature type="active site" description="Proton acceptor; for enolization step" evidence="1">
    <location>
        <position position="63"/>
    </location>
</feature>
<feature type="active site" description="For ring-opening step" evidence="1">
    <location>
        <position position="129"/>
    </location>
</feature>
<feature type="active site" description="Proton acceptor; for ring-opening step" evidence="1">
    <location>
        <position position="131"/>
    </location>
</feature>
<feature type="active site" description="For ring-opening step" evidence="1">
    <location>
        <position position="136"/>
    </location>
</feature>
<proteinExistence type="inferred from homology"/>
<sequence length="262" mass="29103">MNILVVKTPEELAEAGYKLIEEVVKTKENPTLGMATGSSPLGIYAEMRKNKLDTSRVTTVNLDEYVNLPHEDKNSYHYFMQEQLFDHLPFKQTYVPNGMASDLEEECKRYESILAANPVDLQILGIGENGHIGFNEPGTPFNSPTNIVELTESTRQANLRFFEKEEDVPTHAITMGIGSIMKAKQVLLVAMGSKKAEAVKELLQGEYSEECPATVLQRHPNVTVIADQEALSLCSEAIADEHRQVFTISDLLSDSRVGETAN</sequence>
<evidence type="ECO:0000255" key="1">
    <source>
        <dbReference type="HAMAP-Rule" id="MF_01241"/>
    </source>
</evidence>
<keyword id="KW-0119">Carbohydrate metabolism</keyword>
<keyword id="KW-0378">Hydrolase</keyword>
<comment type="function">
    <text evidence="1">Catalyzes the reversible isomerization-deamination of glucosamine 6-phosphate (GlcN6P) to form fructose 6-phosphate (Fru6P) and ammonium ion.</text>
</comment>
<comment type="catalytic activity">
    <reaction evidence="1">
        <text>alpha-D-glucosamine 6-phosphate + H2O = beta-D-fructose 6-phosphate + NH4(+)</text>
        <dbReference type="Rhea" id="RHEA:12172"/>
        <dbReference type="ChEBI" id="CHEBI:15377"/>
        <dbReference type="ChEBI" id="CHEBI:28938"/>
        <dbReference type="ChEBI" id="CHEBI:57634"/>
        <dbReference type="ChEBI" id="CHEBI:75989"/>
        <dbReference type="EC" id="3.5.99.6"/>
    </reaction>
</comment>
<comment type="pathway">
    <text evidence="1">Amino-sugar metabolism; N-acetylneuraminate degradation; D-fructose 6-phosphate from N-acetylneuraminate: step 5/5.</text>
</comment>
<comment type="similarity">
    <text evidence="1">Belongs to the glucosamine/galactosamine-6-phosphate isomerase family. NagB subfamily.</text>
</comment>
<protein>
    <recommendedName>
        <fullName evidence="1">Glucosamine-6-phosphate deaminase</fullName>
        <ecNumber evidence="1">3.5.99.6</ecNumber>
    </recommendedName>
    <alternativeName>
        <fullName evidence="1">GlcN6P deaminase</fullName>
        <shortName evidence="1">GNPDA</shortName>
    </alternativeName>
    <alternativeName>
        <fullName evidence="1">Glucosamine-6-phosphate isomerase</fullName>
    </alternativeName>
</protein>
<organism>
    <name type="scientific">Bacillus cereus (strain B4264)</name>
    <dbReference type="NCBI Taxonomy" id="405532"/>
    <lineage>
        <taxon>Bacteria</taxon>
        <taxon>Bacillati</taxon>
        <taxon>Bacillota</taxon>
        <taxon>Bacilli</taxon>
        <taxon>Bacillales</taxon>
        <taxon>Bacillaceae</taxon>
        <taxon>Bacillus</taxon>
        <taxon>Bacillus cereus group</taxon>
    </lineage>
</organism>
<name>NAGB_BACC4</name>
<dbReference type="EC" id="3.5.99.6" evidence="1"/>
<dbReference type="EMBL" id="CP001176">
    <property type="protein sequence ID" value="ACK60036.1"/>
    <property type="molecule type" value="Genomic_DNA"/>
</dbReference>
<dbReference type="RefSeq" id="WP_001024210.1">
    <property type="nucleotide sequence ID" value="NZ_VEHB01000002.1"/>
</dbReference>
<dbReference type="SMR" id="B7H945"/>
<dbReference type="KEGG" id="bcb:BCB4264_A4163"/>
<dbReference type="HOGENOM" id="CLU_049611_1_0_9"/>
<dbReference type="UniPathway" id="UPA00629">
    <property type="reaction ID" value="UER00684"/>
</dbReference>
<dbReference type="Proteomes" id="UP000007096">
    <property type="component" value="Chromosome"/>
</dbReference>
<dbReference type="GO" id="GO:0005737">
    <property type="term" value="C:cytoplasm"/>
    <property type="evidence" value="ECO:0007669"/>
    <property type="project" value="TreeGrafter"/>
</dbReference>
<dbReference type="GO" id="GO:0004342">
    <property type="term" value="F:glucosamine-6-phosphate deaminase activity"/>
    <property type="evidence" value="ECO:0007669"/>
    <property type="project" value="UniProtKB-UniRule"/>
</dbReference>
<dbReference type="GO" id="GO:0042802">
    <property type="term" value="F:identical protein binding"/>
    <property type="evidence" value="ECO:0007669"/>
    <property type="project" value="TreeGrafter"/>
</dbReference>
<dbReference type="GO" id="GO:0005975">
    <property type="term" value="P:carbohydrate metabolic process"/>
    <property type="evidence" value="ECO:0007669"/>
    <property type="project" value="InterPro"/>
</dbReference>
<dbReference type="GO" id="GO:0006043">
    <property type="term" value="P:glucosamine catabolic process"/>
    <property type="evidence" value="ECO:0007669"/>
    <property type="project" value="TreeGrafter"/>
</dbReference>
<dbReference type="GO" id="GO:0006046">
    <property type="term" value="P:N-acetylglucosamine catabolic process"/>
    <property type="evidence" value="ECO:0007669"/>
    <property type="project" value="TreeGrafter"/>
</dbReference>
<dbReference type="GO" id="GO:0019262">
    <property type="term" value="P:N-acetylneuraminate catabolic process"/>
    <property type="evidence" value="ECO:0007669"/>
    <property type="project" value="UniProtKB-UniRule"/>
</dbReference>
<dbReference type="CDD" id="cd01399">
    <property type="entry name" value="GlcN6P_deaminase"/>
    <property type="match status" value="1"/>
</dbReference>
<dbReference type="FunFam" id="3.40.50.1360:FF:000003">
    <property type="entry name" value="Glucosamine-6-phosphate deaminase"/>
    <property type="match status" value="1"/>
</dbReference>
<dbReference type="Gene3D" id="3.40.50.1360">
    <property type="match status" value="1"/>
</dbReference>
<dbReference type="HAMAP" id="MF_01241">
    <property type="entry name" value="GlcN6P_deamin"/>
    <property type="match status" value="1"/>
</dbReference>
<dbReference type="InterPro" id="IPR006148">
    <property type="entry name" value="Glc/Gal-6P_isomerase"/>
</dbReference>
<dbReference type="InterPro" id="IPR004547">
    <property type="entry name" value="Glucosamine6P_isomerase"/>
</dbReference>
<dbReference type="InterPro" id="IPR018321">
    <property type="entry name" value="Glucosamine6P_isomerase_CS"/>
</dbReference>
<dbReference type="InterPro" id="IPR037171">
    <property type="entry name" value="NagB/RpiA_transferase-like"/>
</dbReference>
<dbReference type="NCBIfam" id="TIGR00502">
    <property type="entry name" value="nagB"/>
    <property type="match status" value="1"/>
</dbReference>
<dbReference type="NCBIfam" id="NF001682">
    <property type="entry name" value="PRK00443.1-1"/>
    <property type="match status" value="1"/>
</dbReference>
<dbReference type="PANTHER" id="PTHR11280">
    <property type="entry name" value="GLUCOSAMINE-6-PHOSPHATE ISOMERASE"/>
    <property type="match status" value="1"/>
</dbReference>
<dbReference type="PANTHER" id="PTHR11280:SF5">
    <property type="entry name" value="GLUCOSAMINE-6-PHOSPHATE ISOMERASE"/>
    <property type="match status" value="1"/>
</dbReference>
<dbReference type="Pfam" id="PF01182">
    <property type="entry name" value="Glucosamine_iso"/>
    <property type="match status" value="1"/>
</dbReference>
<dbReference type="SUPFAM" id="SSF100950">
    <property type="entry name" value="NagB/RpiA/CoA transferase-like"/>
    <property type="match status" value="1"/>
</dbReference>
<dbReference type="PROSITE" id="PS01161">
    <property type="entry name" value="GLC_GALNAC_ISOMERASE"/>
    <property type="match status" value="1"/>
</dbReference>
<reference key="1">
    <citation type="submission" date="2008-10" db="EMBL/GenBank/DDBJ databases">
        <title>Genome sequence of Bacillus cereus B4264.</title>
        <authorList>
            <person name="Dodson R.J."/>
            <person name="Durkin A.S."/>
            <person name="Rosovitz M.J."/>
            <person name="Rasko D.A."/>
            <person name="Hoffmaster A."/>
            <person name="Ravel J."/>
            <person name="Sutton G."/>
        </authorList>
    </citation>
    <scope>NUCLEOTIDE SEQUENCE [LARGE SCALE GENOMIC DNA]</scope>
    <source>
        <strain>B4264</strain>
    </source>
</reference>
<gene>
    <name evidence="1" type="primary">nagB</name>
    <name type="ordered locus">BCB4264_A4163</name>
</gene>
<accession>B7H945</accession>